<accession>A8YWB0</accession>
<sequence>MADNIILECTECGDRSYLSKKNKRKHPERLSLKKYCPVERRATLHRETK</sequence>
<organism>
    <name type="scientific">Lactobacillus helveticus (strain DPC 4571)</name>
    <dbReference type="NCBI Taxonomy" id="405566"/>
    <lineage>
        <taxon>Bacteria</taxon>
        <taxon>Bacillati</taxon>
        <taxon>Bacillota</taxon>
        <taxon>Bacilli</taxon>
        <taxon>Lactobacillales</taxon>
        <taxon>Lactobacillaceae</taxon>
        <taxon>Lactobacillus</taxon>
    </lineage>
</organism>
<feature type="chain" id="PRO_0000356506" description="Large ribosomal subunit protein bL33A">
    <location>
        <begin position="1"/>
        <end position="49"/>
    </location>
</feature>
<comment type="similarity">
    <text evidence="1">Belongs to the bacterial ribosomal protein bL33 family.</text>
</comment>
<protein>
    <recommendedName>
        <fullName evidence="1">Large ribosomal subunit protein bL33A</fullName>
    </recommendedName>
    <alternativeName>
        <fullName evidence="1">50S ribosomal protein L33 1</fullName>
    </alternativeName>
</protein>
<evidence type="ECO:0000255" key="1">
    <source>
        <dbReference type="HAMAP-Rule" id="MF_00294"/>
    </source>
</evidence>
<name>RL331_LACH4</name>
<dbReference type="EMBL" id="CP000517">
    <property type="protein sequence ID" value="ABX27496.1"/>
    <property type="molecule type" value="Genomic_DNA"/>
</dbReference>
<dbReference type="SMR" id="A8YWB0"/>
<dbReference type="KEGG" id="lhe:lhv_1569"/>
<dbReference type="eggNOG" id="COG0267">
    <property type="taxonomic scope" value="Bacteria"/>
</dbReference>
<dbReference type="HOGENOM" id="CLU_190949_0_2_9"/>
<dbReference type="Proteomes" id="UP000000790">
    <property type="component" value="Chromosome"/>
</dbReference>
<dbReference type="GO" id="GO:0005737">
    <property type="term" value="C:cytoplasm"/>
    <property type="evidence" value="ECO:0007669"/>
    <property type="project" value="UniProtKB-ARBA"/>
</dbReference>
<dbReference type="GO" id="GO:1990904">
    <property type="term" value="C:ribonucleoprotein complex"/>
    <property type="evidence" value="ECO:0007669"/>
    <property type="project" value="UniProtKB-KW"/>
</dbReference>
<dbReference type="GO" id="GO:0005840">
    <property type="term" value="C:ribosome"/>
    <property type="evidence" value="ECO:0007669"/>
    <property type="project" value="UniProtKB-KW"/>
</dbReference>
<dbReference type="GO" id="GO:0003735">
    <property type="term" value="F:structural constituent of ribosome"/>
    <property type="evidence" value="ECO:0007669"/>
    <property type="project" value="InterPro"/>
</dbReference>
<dbReference type="GO" id="GO:0006412">
    <property type="term" value="P:translation"/>
    <property type="evidence" value="ECO:0007669"/>
    <property type="project" value="UniProtKB-UniRule"/>
</dbReference>
<dbReference type="Gene3D" id="2.20.28.120">
    <property type="entry name" value="Ribosomal protein L33"/>
    <property type="match status" value="1"/>
</dbReference>
<dbReference type="HAMAP" id="MF_00294">
    <property type="entry name" value="Ribosomal_bL33"/>
    <property type="match status" value="1"/>
</dbReference>
<dbReference type="InterPro" id="IPR001705">
    <property type="entry name" value="Ribosomal_bL33"/>
</dbReference>
<dbReference type="InterPro" id="IPR018264">
    <property type="entry name" value="Ribosomal_bL33_CS"/>
</dbReference>
<dbReference type="InterPro" id="IPR038584">
    <property type="entry name" value="Ribosomal_bL33_sf"/>
</dbReference>
<dbReference type="InterPro" id="IPR011332">
    <property type="entry name" value="Ribosomal_zn-bd"/>
</dbReference>
<dbReference type="NCBIfam" id="NF001764">
    <property type="entry name" value="PRK00504.1"/>
    <property type="match status" value="1"/>
</dbReference>
<dbReference type="NCBIfam" id="NF001860">
    <property type="entry name" value="PRK00595.1"/>
    <property type="match status" value="1"/>
</dbReference>
<dbReference type="NCBIfam" id="TIGR01023">
    <property type="entry name" value="rpmG_bact"/>
    <property type="match status" value="1"/>
</dbReference>
<dbReference type="PANTHER" id="PTHR43168">
    <property type="entry name" value="50S RIBOSOMAL PROTEIN L33, CHLOROPLASTIC"/>
    <property type="match status" value="1"/>
</dbReference>
<dbReference type="PANTHER" id="PTHR43168:SF2">
    <property type="entry name" value="LARGE RIBOSOMAL SUBUNIT PROTEIN BL33C"/>
    <property type="match status" value="1"/>
</dbReference>
<dbReference type="Pfam" id="PF00471">
    <property type="entry name" value="Ribosomal_L33"/>
    <property type="match status" value="1"/>
</dbReference>
<dbReference type="SUPFAM" id="SSF57829">
    <property type="entry name" value="Zn-binding ribosomal proteins"/>
    <property type="match status" value="1"/>
</dbReference>
<dbReference type="PROSITE" id="PS00582">
    <property type="entry name" value="RIBOSOMAL_L33"/>
    <property type="match status" value="1"/>
</dbReference>
<keyword id="KW-0687">Ribonucleoprotein</keyword>
<keyword id="KW-0689">Ribosomal protein</keyword>
<reference key="1">
    <citation type="journal article" date="2008" name="J. Bacteriol.">
        <title>Genome sequence of Lactobacillus helveticus: an organism distinguished by selective gene loss and IS element expansion.</title>
        <authorList>
            <person name="Callanan M."/>
            <person name="Kaleta P."/>
            <person name="O'Callaghan J."/>
            <person name="O'Sullivan O."/>
            <person name="Jordan K."/>
            <person name="McAuliffe O."/>
            <person name="Sangrador-Vegas A."/>
            <person name="Slattery L."/>
            <person name="Fitzgerald G.F."/>
            <person name="Beresford T."/>
            <person name="Ross R.P."/>
        </authorList>
    </citation>
    <scope>NUCLEOTIDE SEQUENCE [LARGE SCALE GENOMIC DNA]</scope>
    <source>
        <strain>DPC 4571</strain>
    </source>
</reference>
<proteinExistence type="inferred from homology"/>
<gene>
    <name evidence="1" type="primary">rpmG1</name>
    <name type="ordered locus">lhv_1569</name>
</gene>